<sequence>MKPPFQEALGIIQQLKQHGYDAYFVGGAVRDLLLGRPIGDVDIATSALPEDVMAIFPKTIDVGSKHGTVVVVHKGKAYEVTTFKTDGDYEDYRRPESVTFVRSLEEDLKRRDFTMNAIAMDEYGTIIDPFGGREAIRRRIIRTVGEAEKRFREDALRMMRAVRFVSELGFALAPDTEQAIVQNAPLLAHISVERMTMEMEKLLGGPFAARALPLLAETGLNAYLPGLAGKEKQLRLAAAYRWPWLAAREERWALLCHALGVQESRPFLRAWKLPNKVVDEAGAILTALADIPRPEAWTNEQLFSAGLERALSVETVRAAFTGAPPGPWHEKLRRRFASLPIKTKGELAVNGKDVIEWVGKPAGPWVKEALDAIWRAVVNGEVENEKERIYAWLMERNRTREKNC</sequence>
<feature type="chain" id="PRO_0000139033" description="CCA-adding enzyme">
    <location>
        <begin position="1"/>
        <end position="404"/>
    </location>
</feature>
<feature type="binding site" evidence="5 8">
    <location>
        <position position="27"/>
    </location>
    <ligand>
        <name>ATP</name>
        <dbReference type="ChEBI" id="CHEBI:30616"/>
    </ligand>
</feature>
<feature type="binding site" evidence="5 9">
    <location>
        <position position="27"/>
    </location>
    <ligand>
        <name>CTP</name>
        <dbReference type="ChEBI" id="CHEBI:37563"/>
    </ligand>
</feature>
<feature type="binding site" evidence="5 8">
    <location>
        <position position="30"/>
    </location>
    <ligand>
        <name>ATP</name>
        <dbReference type="ChEBI" id="CHEBI:30616"/>
    </ligand>
</feature>
<feature type="binding site" evidence="5 9">
    <location>
        <position position="30"/>
    </location>
    <ligand>
        <name>CTP</name>
        <dbReference type="ChEBI" id="CHEBI:37563"/>
    </ligand>
</feature>
<feature type="binding site" evidence="1">
    <location>
        <position position="40"/>
    </location>
    <ligand>
        <name>Mg(2+)</name>
        <dbReference type="ChEBI" id="CHEBI:18420"/>
    </ligand>
</feature>
<feature type="binding site" evidence="1">
    <location>
        <position position="42"/>
    </location>
    <ligand>
        <name>Mg(2+)</name>
        <dbReference type="ChEBI" id="CHEBI:18420"/>
    </ligand>
</feature>
<feature type="binding site" evidence="5 8">
    <location>
        <position position="111"/>
    </location>
    <ligand>
        <name>ATP</name>
        <dbReference type="ChEBI" id="CHEBI:30616"/>
    </ligand>
</feature>
<feature type="binding site" evidence="5 9">
    <location>
        <position position="111"/>
    </location>
    <ligand>
        <name>CTP</name>
        <dbReference type="ChEBI" id="CHEBI:37563"/>
    </ligand>
</feature>
<feature type="binding site" evidence="5 8">
    <location>
        <position position="154"/>
    </location>
    <ligand>
        <name>ATP</name>
        <dbReference type="ChEBI" id="CHEBI:30616"/>
    </ligand>
</feature>
<feature type="binding site" evidence="5 9">
    <location>
        <position position="154"/>
    </location>
    <ligand>
        <name>CTP</name>
        <dbReference type="ChEBI" id="CHEBI:37563"/>
    </ligand>
</feature>
<feature type="binding site" evidence="5 8">
    <location>
        <position position="157"/>
    </location>
    <ligand>
        <name>ATP</name>
        <dbReference type="ChEBI" id="CHEBI:30616"/>
    </ligand>
</feature>
<feature type="binding site" evidence="5 9">
    <location>
        <position position="157"/>
    </location>
    <ligand>
        <name>CTP</name>
        <dbReference type="ChEBI" id="CHEBI:37563"/>
    </ligand>
</feature>
<feature type="binding site" evidence="5 8">
    <location>
        <position position="160"/>
    </location>
    <ligand>
        <name>ATP</name>
        <dbReference type="ChEBI" id="CHEBI:30616"/>
    </ligand>
</feature>
<feature type="binding site" evidence="5 9">
    <location>
        <position position="160"/>
    </location>
    <ligand>
        <name>CTP</name>
        <dbReference type="ChEBI" id="CHEBI:37563"/>
    </ligand>
</feature>
<feature type="binding site" evidence="5 8">
    <location>
        <position position="163"/>
    </location>
    <ligand>
        <name>ATP</name>
        <dbReference type="ChEBI" id="CHEBI:30616"/>
    </ligand>
</feature>
<feature type="binding site" evidence="5 9">
    <location>
        <position position="163"/>
    </location>
    <ligand>
        <name>CTP</name>
        <dbReference type="ChEBI" id="CHEBI:37563"/>
    </ligand>
</feature>
<feature type="site" description="May assist in discriminating ATP from CTP">
    <location>
        <position position="112"/>
    </location>
</feature>
<feature type="site" description="Involved in nucleotide selection" evidence="3">
    <location>
        <position position="153"/>
    </location>
</feature>
<feature type="helix" evidence="11">
    <location>
        <begin position="3"/>
        <end position="17"/>
    </location>
</feature>
<feature type="strand" evidence="11">
    <location>
        <begin position="22"/>
        <end position="26"/>
    </location>
</feature>
<feature type="helix" evidence="11">
    <location>
        <begin position="27"/>
        <end position="34"/>
    </location>
</feature>
<feature type="strand" evidence="11">
    <location>
        <begin position="42"/>
        <end position="47"/>
    </location>
</feature>
<feature type="helix" evidence="11">
    <location>
        <begin position="49"/>
        <end position="55"/>
    </location>
</feature>
<feature type="strand" evidence="11">
    <location>
        <begin position="57"/>
        <end position="63"/>
    </location>
</feature>
<feature type="helix" evidence="11">
    <location>
        <begin position="64"/>
        <end position="66"/>
    </location>
</feature>
<feature type="strand" evidence="11">
    <location>
        <begin position="68"/>
        <end position="73"/>
    </location>
</feature>
<feature type="strand" evidence="11">
    <location>
        <begin position="76"/>
        <end position="82"/>
    </location>
</feature>
<feature type="strand" evidence="10">
    <location>
        <begin position="84"/>
        <end position="86"/>
    </location>
</feature>
<feature type="strand" evidence="10">
    <location>
        <begin position="98"/>
        <end position="100"/>
    </location>
</feature>
<feature type="helix" evidence="11">
    <location>
        <begin position="104"/>
        <end position="109"/>
    </location>
</feature>
<feature type="strand" evidence="11">
    <location>
        <begin position="111"/>
        <end position="114"/>
    </location>
</feature>
<feature type="helix" evidence="11">
    <location>
        <begin position="115"/>
        <end position="117"/>
    </location>
</feature>
<feature type="strand" evidence="10">
    <location>
        <begin position="129"/>
        <end position="131"/>
    </location>
</feature>
<feature type="helix" evidence="11">
    <location>
        <begin position="132"/>
        <end position="138"/>
    </location>
</feature>
<feature type="strand" evidence="11">
    <location>
        <begin position="143"/>
        <end position="145"/>
    </location>
</feature>
<feature type="helix" evidence="11">
    <location>
        <begin position="147"/>
        <end position="153"/>
    </location>
</feature>
<feature type="helix" evidence="11">
    <location>
        <begin position="156"/>
        <end position="168"/>
    </location>
</feature>
<feature type="helix" evidence="11">
    <location>
        <begin position="174"/>
        <end position="183"/>
    </location>
</feature>
<feature type="helix" evidence="11">
    <location>
        <begin position="184"/>
        <end position="189"/>
    </location>
</feature>
<feature type="helix" evidence="11">
    <location>
        <begin position="192"/>
        <end position="203"/>
    </location>
</feature>
<feature type="strand" evidence="11">
    <location>
        <begin position="205"/>
        <end position="207"/>
    </location>
</feature>
<feature type="helix" evidence="11">
    <location>
        <begin position="208"/>
        <end position="217"/>
    </location>
</feature>
<feature type="turn" evidence="11">
    <location>
        <begin position="219"/>
        <end position="222"/>
    </location>
</feature>
<feature type="helix" evidence="11">
    <location>
        <begin position="231"/>
        <end position="236"/>
    </location>
</feature>
<feature type="helix" evidence="11">
    <location>
        <begin position="237"/>
        <end position="239"/>
    </location>
</feature>
<feature type="helix" evidence="11">
    <location>
        <begin position="242"/>
        <end position="244"/>
    </location>
</feature>
<feature type="helix" evidence="11">
    <location>
        <begin position="248"/>
        <end position="258"/>
    </location>
</feature>
<feature type="helix" evidence="11">
    <location>
        <begin position="264"/>
        <end position="270"/>
    </location>
</feature>
<feature type="helix" evidence="11">
    <location>
        <begin position="275"/>
        <end position="290"/>
    </location>
</feature>
<feature type="helix" evidence="11">
    <location>
        <begin position="294"/>
        <end position="296"/>
    </location>
</feature>
<feature type="helix" evidence="11">
    <location>
        <begin position="299"/>
        <end position="321"/>
    </location>
</feature>
<feature type="helix" evidence="11">
    <location>
        <begin position="326"/>
        <end position="336"/>
    </location>
</feature>
<feature type="helix" evidence="11">
    <location>
        <begin position="344"/>
        <end position="346"/>
    </location>
</feature>
<feature type="helix" evidence="11">
    <location>
        <begin position="351"/>
        <end position="358"/>
    </location>
</feature>
<feature type="strand" evidence="10">
    <location>
        <begin position="362"/>
        <end position="364"/>
    </location>
</feature>
<feature type="helix" evidence="11">
    <location>
        <begin position="365"/>
        <end position="378"/>
    </location>
</feature>
<feature type="helix" evidence="11">
    <location>
        <begin position="386"/>
        <end position="397"/>
    </location>
</feature>
<feature type="helix" evidence="11">
    <location>
        <begin position="399"/>
        <end position="403"/>
    </location>
</feature>
<name>CCA_GEOSE</name>
<evidence type="ECO:0000250" key="1">
    <source>
        <dbReference type="UniProtKB" id="O28126"/>
    </source>
</evidence>
<evidence type="ECO:0000250" key="2">
    <source>
        <dbReference type="UniProtKB" id="P06961"/>
    </source>
</evidence>
<evidence type="ECO:0000255" key="3"/>
<evidence type="ECO:0000255" key="4">
    <source>
        <dbReference type="HAMAP-Rule" id="MF_01263"/>
    </source>
</evidence>
<evidence type="ECO:0000269" key="5">
    <source>
    </source>
</evidence>
<evidence type="ECO:0000305" key="6"/>
<evidence type="ECO:0007744" key="7">
    <source>
        <dbReference type="PDB" id="1MIV"/>
    </source>
</evidence>
<evidence type="ECO:0007744" key="8">
    <source>
        <dbReference type="PDB" id="1MIW"/>
    </source>
</evidence>
<evidence type="ECO:0007744" key="9">
    <source>
        <dbReference type="PDB" id="1MIY"/>
    </source>
</evidence>
<evidence type="ECO:0007829" key="10">
    <source>
        <dbReference type="PDB" id="1MIV"/>
    </source>
</evidence>
<evidence type="ECO:0007829" key="11">
    <source>
        <dbReference type="PDB" id="1MIW"/>
    </source>
</evidence>
<proteinExistence type="evidence at protein level"/>
<protein>
    <recommendedName>
        <fullName evidence="4">CCA-adding enzyme</fullName>
        <ecNumber evidence="2 4">2.7.7.72</ecNumber>
    </recommendedName>
    <alternativeName>
        <fullName evidence="4">CCA tRNA nucleotidyltransferase</fullName>
    </alternativeName>
    <alternativeName>
        <fullName evidence="4">tRNA CCA-pyrophosphorylase</fullName>
    </alternativeName>
    <alternativeName>
        <fullName evidence="4">tRNA adenylyl-/cytidylyl- transferase</fullName>
    </alternativeName>
    <alternativeName>
        <fullName evidence="4">tRNA nucleotidyltransferase</fullName>
    </alternativeName>
    <alternativeName>
        <fullName evidence="4">tRNA-NT</fullName>
    </alternativeName>
</protein>
<reference evidence="7 8 9" key="1">
    <citation type="journal article" date="2002" name="Cell">
        <title>Crystal structures of the Bacillus stearothermophilus CCA-adding enzyme and its complexes with ATP or CTP.</title>
        <authorList>
            <person name="Li F."/>
            <person name="Xiong Y."/>
            <person name="Wang J."/>
            <person name="Cho H.D."/>
            <person name="Tomita K."/>
            <person name="Weiner A.M."/>
            <person name="Steitz T.A."/>
        </authorList>
    </citation>
    <scope>NUCLEOTIDE SEQUENCE [GENOMIC DNA]</scope>
    <scope>X-RAY CRYSTALLOGRAPHY (3.0 ANGSTROMS) OF NATIVE PROTEIN AND COMPLEXES WITH ATP AND CTP</scope>
    <scope>SUBUNIT</scope>
</reference>
<dbReference type="EC" id="2.7.7.72" evidence="2 4"/>
<dbReference type="PDB" id="1MIV">
    <property type="method" value="X-ray"/>
    <property type="resolution" value="3.50 A"/>
    <property type="chains" value="A/B=1-404"/>
</dbReference>
<dbReference type="PDB" id="1MIW">
    <property type="method" value="X-ray"/>
    <property type="resolution" value="3.00 A"/>
    <property type="chains" value="A/B=1-404"/>
</dbReference>
<dbReference type="PDB" id="1MIY">
    <property type="method" value="X-ray"/>
    <property type="resolution" value="3.52 A"/>
    <property type="chains" value="A/B=1-404"/>
</dbReference>
<dbReference type="PDBsum" id="1MIV"/>
<dbReference type="PDBsum" id="1MIW"/>
<dbReference type="PDBsum" id="1MIY"/>
<dbReference type="SMR" id="Q7SIB1"/>
<dbReference type="DrugBank" id="DB02431">
    <property type="generic name" value="Cytidine-5'-Triphosphate"/>
</dbReference>
<dbReference type="BRENDA" id="2.7.7.72">
    <property type="organism ID" value="623"/>
</dbReference>
<dbReference type="EvolutionaryTrace" id="Q7SIB1"/>
<dbReference type="GO" id="GO:0005524">
    <property type="term" value="F:ATP binding"/>
    <property type="evidence" value="ECO:0007669"/>
    <property type="project" value="UniProtKB-UniRule"/>
</dbReference>
<dbReference type="GO" id="GO:0004810">
    <property type="term" value="F:CCA tRNA nucleotidyltransferase activity"/>
    <property type="evidence" value="ECO:0007669"/>
    <property type="project" value="UniProtKB-UniRule"/>
</dbReference>
<dbReference type="GO" id="GO:0000287">
    <property type="term" value="F:magnesium ion binding"/>
    <property type="evidence" value="ECO:0007669"/>
    <property type="project" value="UniProtKB-UniRule"/>
</dbReference>
<dbReference type="GO" id="GO:0000049">
    <property type="term" value="F:tRNA binding"/>
    <property type="evidence" value="ECO:0007669"/>
    <property type="project" value="UniProtKB-UniRule"/>
</dbReference>
<dbReference type="GO" id="GO:0042245">
    <property type="term" value="P:RNA repair"/>
    <property type="evidence" value="ECO:0007669"/>
    <property type="project" value="UniProtKB-KW"/>
</dbReference>
<dbReference type="GO" id="GO:0001680">
    <property type="term" value="P:tRNA 3'-terminal CCA addition"/>
    <property type="evidence" value="ECO:0007669"/>
    <property type="project" value="UniProtKB-UniRule"/>
</dbReference>
<dbReference type="CDD" id="cd05398">
    <property type="entry name" value="NT_ClassII-CCAase"/>
    <property type="match status" value="1"/>
</dbReference>
<dbReference type="Gene3D" id="1.10.110.30">
    <property type="match status" value="1"/>
</dbReference>
<dbReference type="Gene3D" id="1.10.246.80">
    <property type="match status" value="1"/>
</dbReference>
<dbReference type="Gene3D" id="1.20.58.560">
    <property type="match status" value="1"/>
</dbReference>
<dbReference type="Gene3D" id="3.30.460.10">
    <property type="entry name" value="Beta Polymerase, domain 2"/>
    <property type="match status" value="1"/>
</dbReference>
<dbReference type="HAMAP" id="MF_01263">
    <property type="entry name" value="CCA_bact_type3"/>
    <property type="match status" value="1"/>
</dbReference>
<dbReference type="InterPro" id="IPR050264">
    <property type="entry name" value="Bact_CCA-adding_enz_type3_sf"/>
</dbReference>
<dbReference type="InterPro" id="IPR032810">
    <property type="entry name" value="CCA-adding_enz_C"/>
</dbReference>
<dbReference type="InterPro" id="IPR023068">
    <property type="entry name" value="CCA-adding_enz_firmicutes"/>
</dbReference>
<dbReference type="InterPro" id="IPR043519">
    <property type="entry name" value="NT_sf"/>
</dbReference>
<dbReference type="InterPro" id="IPR002646">
    <property type="entry name" value="PolA_pol_head_dom"/>
</dbReference>
<dbReference type="InterPro" id="IPR032828">
    <property type="entry name" value="PolyA_RNA-bd"/>
</dbReference>
<dbReference type="NCBIfam" id="NF009814">
    <property type="entry name" value="PRK13299.1"/>
    <property type="match status" value="1"/>
</dbReference>
<dbReference type="PANTHER" id="PTHR46173">
    <property type="entry name" value="CCA TRNA NUCLEOTIDYLTRANSFERASE 1, MITOCHONDRIAL"/>
    <property type="match status" value="1"/>
</dbReference>
<dbReference type="PANTHER" id="PTHR46173:SF1">
    <property type="entry name" value="CCA TRNA NUCLEOTIDYLTRANSFERASE 1, MITOCHONDRIAL"/>
    <property type="match status" value="1"/>
</dbReference>
<dbReference type="Pfam" id="PF01743">
    <property type="entry name" value="PolyA_pol"/>
    <property type="match status" value="1"/>
</dbReference>
<dbReference type="Pfam" id="PF12627">
    <property type="entry name" value="PolyA_pol_RNAbd"/>
    <property type="match status" value="1"/>
</dbReference>
<dbReference type="Pfam" id="PF13735">
    <property type="entry name" value="tRNA_NucTran2_2"/>
    <property type="match status" value="1"/>
</dbReference>
<dbReference type="SUPFAM" id="SSF81301">
    <property type="entry name" value="Nucleotidyltransferase"/>
    <property type="match status" value="1"/>
</dbReference>
<dbReference type="SUPFAM" id="SSF81891">
    <property type="entry name" value="Poly A polymerase C-terminal region-like"/>
    <property type="match status" value="1"/>
</dbReference>
<gene>
    <name evidence="4" type="primary">cca</name>
</gene>
<accession>Q7SIB1</accession>
<comment type="function">
    <text evidence="1 2">Catalyzes the addition and repair of the essential 3'-terminal CCA sequence in tRNAs without using a nucleic acid template. Adds these three nucleotides in the order of C, C, and A to the tRNA nucleotide-73, using CTP and ATP as substrates and producing inorganic pyrophosphate. tRNA 3'-terminal CCA addition is required both for tRNA processing and repair. Also involved in tRNA surveillance by mediating tandem CCA addition to generate a CCACCA at the 3' terminus of unstable tRNAs. While stable tRNAs receive only 3'-terminal CCA, unstable tRNAs are marked with CCACCA and rapidly degraded (By similarity). The structural flexibility of RNA controls the choice between CCA versus CCACCA addition: following the first CCA addition cycle, nucleotide-binding to the active site triggers a clockwise screw motion, producing torque on the RNA. This ejects stable RNAs, whereas unstable RNAs are refolded while bound to the enzyme and subjected to a second CCA catalytic cycle (By similarity).</text>
</comment>
<comment type="catalytic activity">
    <reaction evidence="2">
        <text>a tRNA precursor + 2 CTP + ATP = a tRNA with a 3' CCA end + 3 diphosphate</text>
        <dbReference type="Rhea" id="RHEA:14433"/>
        <dbReference type="Rhea" id="RHEA-COMP:10465"/>
        <dbReference type="Rhea" id="RHEA-COMP:10468"/>
        <dbReference type="ChEBI" id="CHEBI:30616"/>
        <dbReference type="ChEBI" id="CHEBI:33019"/>
        <dbReference type="ChEBI" id="CHEBI:37563"/>
        <dbReference type="ChEBI" id="CHEBI:74896"/>
        <dbReference type="ChEBI" id="CHEBI:83071"/>
        <dbReference type="EC" id="2.7.7.72"/>
    </reaction>
</comment>
<comment type="catalytic activity">
    <reaction evidence="4">
        <text>a tRNA with a 3' CCA end + 2 CTP + ATP = a tRNA with a 3' CCACCA end + 3 diphosphate</text>
        <dbReference type="Rhea" id="RHEA:76235"/>
        <dbReference type="Rhea" id="RHEA-COMP:10468"/>
        <dbReference type="Rhea" id="RHEA-COMP:18655"/>
        <dbReference type="ChEBI" id="CHEBI:30616"/>
        <dbReference type="ChEBI" id="CHEBI:33019"/>
        <dbReference type="ChEBI" id="CHEBI:37563"/>
        <dbReference type="ChEBI" id="CHEBI:83071"/>
        <dbReference type="ChEBI" id="CHEBI:195187"/>
    </reaction>
    <physiologicalReaction direction="left-to-right" evidence="4">
        <dbReference type="Rhea" id="RHEA:76236"/>
    </physiologicalReaction>
</comment>
<comment type="cofactor">
    <cofactor evidence="1">
        <name>Mg(2+)</name>
        <dbReference type="ChEBI" id="CHEBI:18420"/>
    </cofactor>
</comment>
<comment type="subunit">
    <text evidence="4 5">Homodimer.</text>
</comment>
<comment type="domain">
    <text evidence="5">The crystal structure reveals a seahorse-shaped subunit consisting of four domains: head, neck, body, and tail. The head domain contains the nucleotidyltransferase activity. The neck domain provides a specific template for the incoming ATP or CTP, whereas the body and tail domains may be involved in tRNA binding.</text>
</comment>
<comment type="miscellaneous">
    <text evidence="4 5">A single active site specifically recognizes both ATP and CTP and is responsible for their addition.</text>
</comment>
<comment type="similarity">
    <text evidence="4 6">Belongs to the tRNA nucleotidyltransferase/poly(A) polymerase family. Bacterial CCA-adding enzyme type 3 subfamily.</text>
</comment>
<keyword id="KW-0002">3D-structure</keyword>
<keyword id="KW-0067">ATP-binding</keyword>
<keyword id="KW-0460">Magnesium</keyword>
<keyword id="KW-0479">Metal-binding</keyword>
<keyword id="KW-0547">Nucleotide-binding</keyword>
<keyword id="KW-0548">Nucleotidyltransferase</keyword>
<keyword id="KW-0692">RNA repair</keyword>
<keyword id="KW-0694">RNA-binding</keyword>
<keyword id="KW-0808">Transferase</keyword>
<keyword id="KW-0819">tRNA processing</keyword>
<organism>
    <name type="scientific">Geobacillus stearothermophilus</name>
    <name type="common">Bacillus stearothermophilus</name>
    <dbReference type="NCBI Taxonomy" id="1422"/>
    <lineage>
        <taxon>Bacteria</taxon>
        <taxon>Bacillati</taxon>
        <taxon>Bacillota</taxon>
        <taxon>Bacilli</taxon>
        <taxon>Bacillales</taxon>
        <taxon>Anoxybacillaceae</taxon>
        <taxon>Geobacillus</taxon>
    </lineage>
</organism>